<comment type="subcellular location">
    <subcellularLocation>
        <location>Plastid</location>
        <location>Chloroplast</location>
    </subcellularLocation>
</comment>
<comment type="similarity">
    <text evidence="1">Belongs to the bacterial ribosomal protein bL33 family.</text>
</comment>
<geneLocation type="chloroplast"/>
<sequence>MAKSKSSRVGISLECTACRANANQPGVNRYRTTKNKKNTPNRLELKKFCPYCGHHTIHREIK</sequence>
<reference key="1">
    <citation type="journal article" date="2003" name="DNA Res.">
        <title>Complete sequence and analysis of the plastid genome of the unicellular red alga Cyanidioschyzon merolae.</title>
        <authorList>
            <person name="Ohta N."/>
            <person name="Matsuzaki M."/>
            <person name="Misumi O."/>
            <person name="Miyagishima S.-Y."/>
            <person name="Nozaki H."/>
            <person name="Tanaka K."/>
            <person name="Shin-i T."/>
            <person name="Kohara Y."/>
            <person name="Kuroiwa T."/>
        </authorList>
    </citation>
    <scope>NUCLEOTIDE SEQUENCE [LARGE SCALE GENOMIC DNA]</scope>
    <source>
        <strain>NIES-3377 / 10D</strain>
    </source>
</reference>
<proteinExistence type="inferred from homology"/>
<evidence type="ECO:0000255" key="1">
    <source>
        <dbReference type="HAMAP-Rule" id="MF_00294"/>
    </source>
</evidence>
<evidence type="ECO:0000305" key="2"/>
<protein>
    <recommendedName>
        <fullName evidence="1">Large ribosomal subunit protein bL33c</fullName>
    </recommendedName>
    <alternativeName>
        <fullName evidence="2">50S ribosomal protein L33, chloroplastic</fullName>
    </alternativeName>
</protein>
<organism>
    <name type="scientific">Cyanidioschyzon merolae (strain NIES-3377 / 10D)</name>
    <name type="common">Unicellular red alga</name>
    <dbReference type="NCBI Taxonomy" id="280699"/>
    <lineage>
        <taxon>Eukaryota</taxon>
        <taxon>Rhodophyta</taxon>
        <taxon>Bangiophyceae</taxon>
        <taxon>Cyanidiales</taxon>
        <taxon>Cyanidiaceae</taxon>
        <taxon>Cyanidioschyzon</taxon>
    </lineage>
</organism>
<gene>
    <name evidence="1" type="primary">rpl33</name>
</gene>
<dbReference type="EMBL" id="AB002583">
    <property type="protein sequence ID" value="BAC76276.1"/>
    <property type="molecule type" value="Genomic_DNA"/>
</dbReference>
<dbReference type="RefSeq" id="NP_849114.1">
    <property type="nucleotide sequence ID" value="NC_004799.1"/>
</dbReference>
<dbReference type="STRING" id="280699.Q85FR9"/>
<dbReference type="EnsemblPlants" id="CMV214CT">
    <property type="protein sequence ID" value="CMV214CT"/>
    <property type="gene ID" value="CMV214C"/>
</dbReference>
<dbReference type="GeneID" id="844987"/>
<dbReference type="Gramene" id="CMV214CT">
    <property type="protein sequence ID" value="CMV214CT"/>
    <property type="gene ID" value="CMV214C"/>
</dbReference>
<dbReference type="KEGG" id="cme:CymeCp182"/>
<dbReference type="eggNOG" id="ENOG502S7HT">
    <property type="taxonomic scope" value="Eukaryota"/>
</dbReference>
<dbReference type="HOGENOM" id="CLU_190949_3_0_1"/>
<dbReference type="Proteomes" id="UP000007014">
    <property type="component" value="Chloroplast"/>
</dbReference>
<dbReference type="GO" id="GO:0009507">
    <property type="term" value="C:chloroplast"/>
    <property type="evidence" value="ECO:0007669"/>
    <property type="project" value="UniProtKB-SubCell"/>
</dbReference>
<dbReference type="GO" id="GO:1990904">
    <property type="term" value="C:ribonucleoprotein complex"/>
    <property type="evidence" value="ECO:0007669"/>
    <property type="project" value="UniProtKB-KW"/>
</dbReference>
<dbReference type="GO" id="GO:0005840">
    <property type="term" value="C:ribosome"/>
    <property type="evidence" value="ECO:0007669"/>
    <property type="project" value="UniProtKB-KW"/>
</dbReference>
<dbReference type="GO" id="GO:0003735">
    <property type="term" value="F:structural constituent of ribosome"/>
    <property type="evidence" value="ECO:0007669"/>
    <property type="project" value="InterPro"/>
</dbReference>
<dbReference type="GO" id="GO:0006412">
    <property type="term" value="P:translation"/>
    <property type="evidence" value="ECO:0007669"/>
    <property type="project" value="UniProtKB-UniRule"/>
</dbReference>
<dbReference type="Gene3D" id="2.20.28.120">
    <property type="entry name" value="Ribosomal protein L33"/>
    <property type="match status" value="1"/>
</dbReference>
<dbReference type="HAMAP" id="MF_00294">
    <property type="entry name" value="Ribosomal_bL33"/>
    <property type="match status" value="1"/>
</dbReference>
<dbReference type="InterPro" id="IPR001705">
    <property type="entry name" value="Ribosomal_bL33"/>
</dbReference>
<dbReference type="InterPro" id="IPR018264">
    <property type="entry name" value="Ribosomal_bL33_CS"/>
</dbReference>
<dbReference type="InterPro" id="IPR038584">
    <property type="entry name" value="Ribosomal_bL33_sf"/>
</dbReference>
<dbReference type="InterPro" id="IPR011332">
    <property type="entry name" value="Ribosomal_zn-bd"/>
</dbReference>
<dbReference type="NCBIfam" id="NF001764">
    <property type="entry name" value="PRK00504.1"/>
    <property type="match status" value="1"/>
</dbReference>
<dbReference type="NCBIfam" id="NF001860">
    <property type="entry name" value="PRK00595.1"/>
    <property type="match status" value="1"/>
</dbReference>
<dbReference type="NCBIfam" id="TIGR01023">
    <property type="entry name" value="rpmG_bact"/>
    <property type="match status" value="1"/>
</dbReference>
<dbReference type="PANTHER" id="PTHR43168">
    <property type="entry name" value="50S RIBOSOMAL PROTEIN L33, CHLOROPLASTIC"/>
    <property type="match status" value="1"/>
</dbReference>
<dbReference type="PANTHER" id="PTHR43168:SF2">
    <property type="entry name" value="LARGE RIBOSOMAL SUBUNIT PROTEIN BL33C"/>
    <property type="match status" value="1"/>
</dbReference>
<dbReference type="Pfam" id="PF00471">
    <property type="entry name" value="Ribosomal_L33"/>
    <property type="match status" value="1"/>
</dbReference>
<dbReference type="SUPFAM" id="SSF57829">
    <property type="entry name" value="Zn-binding ribosomal proteins"/>
    <property type="match status" value="1"/>
</dbReference>
<dbReference type="PROSITE" id="PS00582">
    <property type="entry name" value="RIBOSOMAL_L33"/>
    <property type="match status" value="1"/>
</dbReference>
<name>RK33_CYAM1</name>
<accession>Q85FR9</accession>
<keyword id="KW-0150">Chloroplast</keyword>
<keyword id="KW-0934">Plastid</keyword>
<keyword id="KW-1185">Reference proteome</keyword>
<keyword id="KW-0687">Ribonucleoprotein</keyword>
<keyword id="KW-0689">Ribosomal protein</keyword>
<feature type="chain" id="PRO_0000170280" description="Large ribosomal subunit protein bL33c">
    <location>
        <begin position="1"/>
        <end position="62"/>
    </location>
</feature>